<name>CYSH_SALNS</name>
<keyword id="KW-0963">Cytoplasm</keyword>
<keyword id="KW-0560">Oxidoreductase</keyword>
<accession>B4T473</accession>
<comment type="function">
    <text evidence="1">Catalyzes the formation of sulfite from phosphoadenosine 5'-phosphosulfate (PAPS) using thioredoxin as an electron donor.</text>
</comment>
<comment type="catalytic activity">
    <reaction evidence="1">
        <text>[thioredoxin]-disulfide + sulfite + adenosine 3',5'-bisphosphate + 2 H(+) = [thioredoxin]-dithiol + 3'-phosphoadenylyl sulfate</text>
        <dbReference type="Rhea" id="RHEA:11724"/>
        <dbReference type="Rhea" id="RHEA-COMP:10698"/>
        <dbReference type="Rhea" id="RHEA-COMP:10700"/>
        <dbReference type="ChEBI" id="CHEBI:15378"/>
        <dbReference type="ChEBI" id="CHEBI:17359"/>
        <dbReference type="ChEBI" id="CHEBI:29950"/>
        <dbReference type="ChEBI" id="CHEBI:50058"/>
        <dbReference type="ChEBI" id="CHEBI:58339"/>
        <dbReference type="ChEBI" id="CHEBI:58343"/>
        <dbReference type="EC" id="1.8.4.8"/>
    </reaction>
</comment>
<comment type="pathway">
    <text evidence="1">Sulfur metabolism; hydrogen sulfide biosynthesis; sulfite from sulfate: step 3/3.</text>
</comment>
<comment type="subcellular location">
    <subcellularLocation>
        <location evidence="1">Cytoplasm</location>
    </subcellularLocation>
</comment>
<comment type="similarity">
    <text evidence="1">Belongs to the PAPS reductase family. CysH subfamily.</text>
</comment>
<feature type="chain" id="PRO_1000092184" description="Phosphoadenosine 5'-phosphosulfate reductase">
    <location>
        <begin position="1"/>
        <end position="244"/>
    </location>
</feature>
<feature type="active site" description="Nucleophile; cysteine thiosulfonate intermediate" evidence="1">
    <location>
        <position position="239"/>
    </location>
</feature>
<evidence type="ECO:0000255" key="1">
    <source>
        <dbReference type="HAMAP-Rule" id="MF_00063"/>
    </source>
</evidence>
<gene>
    <name evidence="1" type="primary">cysH</name>
    <name type="ordered locus">SNSL254_A3157</name>
</gene>
<sequence length="244" mass="28025">MSQLDLNALNELPKVDRVMALAETNAQLEKLSAEERVAWALENLPGEYVLSSSFGIQAAVSLHLVNQIRPDIPVILTDTGYLFPETYQFIDELTDKLKLNLKVYRAGESPAWQEARYGKLWEQGVEGIEKYNDINKVEPMNRALKELKAQTWFAGLRREQSGSRAHLPVLAIQRGVFKVLPIIDWDNRTVYQYLQKHGLKYHPLWDQGYLSVGDIHTTRKWEPGMAEEETRFFGLKRECGLHEG</sequence>
<proteinExistence type="inferred from homology"/>
<protein>
    <recommendedName>
        <fullName evidence="1">Phosphoadenosine 5'-phosphosulfate reductase</fullName>
        <shortName evidence="1">PAPS reductase</shortName>
        <ecNumber evidence="1">1.8.4.8</ecNumber>
    </recommendedName>
    <alternativeName>
        <fullName evidence="1">3'-phosphoadenylylsulfate reductase</fullName>
    </alternativeName>
    <alternativeName>
        <fullName evidence="1">PAPS reductase, thioredoxin dependent</fullName>
    </alternativeName>
    <alternativeName>
        <fullName evidence="1">PAPS sulfotransferase</fullName>
    </alternativeName>
    <alternativeName>
        <fullName evidence="1">PAdoPS reductase</fullName>
    </alternativeName>
</protein>
<organism>
    <name type="scientific">Salmonella newport (strain SL254)</name>
    <dbReference type="NCBI Taxonomy" id="423368"/>
    <lineage>
        <taxon>Bacteria</taxon>
        <taxon>Pseudomonadati</taxon>
        <taxon>Pseudomonadota</taxon>
        <taxon>Gammaproteobacteria</taxon>
        <taxon>Enterobacterales</taxon>
        <taxon>Enterobacteriaceae</taxon>
        <taxon>Salmonella</taxon>
    </lineage>
</organism>
<dbReference type="EC" id="1.8.4.8" evidence="1"/>
<dbReference type="EMBL" id="CP001113">
    <property type="protein sequence ID" value="ACF62147.1"/>
    <property type="molecule type" value="Genomic_DNA"/>
</dbReference>
<dbReference type="RefSeq" id="WP_000080403.1">
    <property type="nucleotide sequence ID" value="NZ_CCMR01000001.1"/>
</dbReference>
<dbReference type="SMR" id="B4T473"/>
<dbReference type="KEGG" id="see:SNSL254_A3157"/>
<dbReference type="HOGENOM" id="CLU_044089_3_0_6"/>
<dbReference type="UniPathway" id="UPA00140">
    <property type="reaction ID" value="UER00206"/>
</dbReference>
<dbReference type="Proteomes" id="UP000008824">
    <property type="component" value="Chromosome"/>
</dbReference>
<dbReference type="GO" id="GO:0005737">
    <property type="term" value="C:cytoplasm"/>
    <property type="evidence" value="ECO:0007669"/>
    <property type="project" value="UniProtKB-SubCell"/>
</dbReference>
<dbReference type="GO" id="GO:0004604">
    <property type="term" value="F:phosphoadenylyl-sulfate reductase (thioredoxin) activity"/>
    <property type="evidence" value="ECO:0007669"/>
    <property type="project" value="UniProtKB-UniRule"/>
</dbReference>
<dbReference type="GO" id="GO:0070814">
    <property type="term" value="P:hydrogen sulfide biosynthetic process"/>
    <property type="evidence" value="ECO:0007669"/>
    <property type="project" value="UniProtKB-UniRule"/>
</dbReference>
<dbReference type="GO" id="GO:0019379">
    <property type="term" value="P:sulfate assimilation, phosphoadenylyl sulfate reduction by phosphoadenylyl-sulfate reductase (thioredoxin)"/>
    <property type="evidence" value="ECO:0007669"/>
    <property type="project" value="UniProtKB-UniRule"/>
</dbReference>
<dbReference type="CDD" id="cd23945">
    <property type="entry name" value="PAPS_reductase"/>
    <property type="match status" value="1"/>
</dbReference>
<dbReference type="FunFam" id="3.40.50.620:FF:000043">
    <property type="entry name" value="Phosphoadenosine phosphosulfate reductase"/>
    <property type="match status" value="1"/>
</dbReference>
<dbReference type="Gene3D" id="3.40.50.620">
    <property type="entry name" value="HUPs"/>
    <property type="match status" value="1"/>
</dbReference>
<dbReference type="HAMAP" id="MF_00063">
    <property type="entry name" value="CysH"/>
    <property type="match status" value="1"/>
</dbReference>
<dbReference type="InterPro" id="IPR004511">
    <property type="entry name" value="PAPS/APS_Rdtase"/>
</dbReference>
<dbReference type="InterPro" id="IPR002500">
    <property type="entry name" value="PAPS_reduct_dom"/>
</dbReference>
<dbReference type="InterPro" id="IPR011800">
    <property type="entry name" value="PAPS_reductase_CysH"/>
</dbReference>
<dbReference type="InterPro" id="IPR014729">
    <property type="entry name" value="Rossmann-like_a/b/a_fold"/>
</dbReference>
<dbReference type="NCBIfam" id="TIGR00434">
    <property type="entry name" value="cysH"/>
    <property type="match status" value="1"/>
</dbReference>
<dbReference type="NCBIfam" id="TIGR02057">
    <property type="entry name" value="PAPS_reductase"/>
    <property type="match status" value="1"/>
</dbReference>
<dbReference type="NCBIfam" id="NF002537">
    <property type="entry name" value="PRK02090.1"/>
    <property type="match status" value="1"/>
</dbReference>
<dbReference type="PANTHER" id="PTHR46509">
    <property type="entry name" value="PHOSPHOADENOSINE PHOSPHOSULFATE REDUCTASE"/>
    <property type="match status" value="1"/>
</dbReference>
<dbReference type="PANTHER" id="PTHR46509:SF1">
    <property type="entry name" value="PHOSPHOADENOSINE PHOSPHOSULFATE REDUCTASE"/>
    <property type="match status" value="1"/>
</dbReference>
<dbReference type="Pfam" id="PF01507">
    <property type="entry name" value="PAPS_reduct"/>
    <property type="match status" value="1"/>
</dbReference>
<dbReference type="PIRSF" id="PIRSF000857">
    <property type="entry name" value="PAPS_reductase"/>
    <property type="match status" value="1"/>
</dbReference>
<dbReference type="SUPFAM" id="SSF52402">
    <property type="entry name" value="Adenine nucleotide alpha hydrolases-like"/>
    <property type="match status" value="1"/>
</dbReference>
<reference key="1">
    <citation type="journal article" date="2011" name="J. Bacteriol.">
        <title>Comparative genomics of 28 Salmonella enterica isolates: evidence for CRISPR-mediated adaptive sublineage evolution.</title>
        <authorList>
            <person name="Fricke W.F."/>
            <person name="Mammel M.K."/>
            <person name="McDermott P.F."/>
            <person name="Tartera C."/>
            <person name="White D.G."/>
            <person name="Leclerc J.E."/>
            <person name="Ravel J."/>
            <person name="Cebula T.A."/>
        </authorList>
    </citation>
    <scope>NUCLEOTIDE SEQUENCE [LARGE SCALE GENOMIC DNA]</scope>
    <source>
        <strain>SL254</strain>
    </source>
</reference>